<protein>
    <recommendedName>
        <fullName evidence="1 4">Elevenin</fullName>
    </recommendedName>
    <alternativeName>
        <fullName evidence="3">Conoporin</fullName>
    </alternativeName>
</protein>
<feature type="signal peptide" evidence="2">
    <location>
        <begin position="1"/>
        <end position="24"/>
    </location>
</feature>
<feature type="peptide" id="PRO_0000458104" description="Elevenin" evidence="1">
    <location>
        <begin position="25"/>
        <end position="43"/>
    </location>
</feature>
<feature type="propeptide" id="PRO_0000458105" evidence="1">
    <location>
        <begin position="44"/>
        <end position="100"/>
    </location>
</feature>
<feature type="disulfide bond" evidence="1">
    <location>
        <begin position="29"/>
        <end position="38"/>
    </location>
</feature>
<reference key="1">
    <citation type="journal article" date="2021" name="Toxins">
        <title>A combined transcriptomics and proteomics approach reveals the differences in the predatory and defensive venoms of the molluscivorous cone snail Cylinder ammiralis (Caenogastropoda: Conidae).</title>
        <authorList>
            <person name="Abalde S."/>
            <person name="Dutertre S."/>
            <person name="Zardoya R."/>
        </authorList>
    </citation>
    <scope>NUCLEOTIDE SEQUENCE [MRNA]</scope>
    <source>
        <tissue>Venom duct</tissue>
    </source>
</reference>
<organism>
    <name type="scientific">Conus ammiralis</name>
    <name type="common">Admiral cone</name>
    <dbReference type="NCBI Taxonomy" id="97188"/>
    <lineage>
        <taxon>Eukaryota</taxon>
        <taxon>Metazoa</taxon>
        <taxon>Spiralia</taxon>
        <taxon>Lophotrochozoa</taxon>
        <taxon>Mollusca</taxon>
        <taxon>Gastropoda</taxon>
        <taxon>Caenogastropoda</taxon>
        <taxon>Neogastropoda</taxon>
        <taxon>Conoidea</taxon>
        <taxon>Conidae</taxon>
        <taxon>Conus</taxon>
        <taxon>Cylinder</taxon>
    </lineage>
</organism>
<accession>P0DQY8</accession>
<proteinExistence type="inferred from homology"/>
<comment type="function">
    <text evidence="1">May mimic the function of prey elevenin neuropeptide. In vivo, intracranial injection in mice induces hyperactivity.</text>
</comment>
<comment type="subunit">
    <text evidence="1">Monomer.</text>
</comment>
<comment type="subcellular location">
    <subcellularLocation>
        <location evidence="5">Secreted</location>
    </subcellularLocation>
</comment>
<comment type="tissue specificity">
    <text evidence="5">Expressed by the venom duct.</text>
</comment>
<comment type="domain">
    <text evidence="4">The cysteine framework is C-C.</text>
</comment>
<comment type="miscellaneous">
    <text evidence="1">Negative results: has no effect on six different human nAChR subtypes including alpha-1-beta-1-epsilon-delta-epsilon/CHRNA1-CHRNB1-CHRND-CHRNE, alpha-3-beta-2/CHRNA3-CHRNB2, alpha-3-beta-4/CHRNA3-CHRNB4, alpha-4-beta-2/CHRNA4-CHRNB2, alpha-7/CHRNA7 and alpha-9-alpha-10/CHRNA9-CHRNA10, when tested at 1 uM.</text>
</comment>
<comment type="similarity">
    <text evidence="4">Belongs to the elevenin family.</text>
</comment>
<dbReference type="EMBL" id="MZ484170">
    <property type="protein sequence ID" value="UBT01760.1"/>
    <property type="molecule type" value="mRNA"/>
</dbReference>
<dbReference type="SMR" id="P0DQY8"/>
<dbReference type="GO" id="GO:0005576">
    <property type="term" value="C:extracellular region"/>
    <property type="evidence" value="ECO:0007669"/>
    <property type="project" value="UniProtKB-SubCell"/>
</dbReference>
<dbReference type="GO" id="GO:0090729">
    <property type="term" value="F:toxin activity"/>
    <property type="evidence" value="ECO:0007669"/>
    <property type="project" value="UniProtKB-KW"/>
</dbReference>
<sequence>MALSQKALLVLVLSMLLTASDSWARRINCKVFVYAPICRGVAAKRGGDSLSVGGSAELDDTLTDPFLKSEEPKEWRELTRLSRVLQTFLSHPTGEMEQHD</sequence>
<evidence type="ECO:0000250" key="1">
    <source>
        <dbReference type="UniProtKB" id="A0A0F7YZQ7"/>
    </source>
</evidence>
<evidence type="ECO:0000255" key="2"/>
<evidence type="ECO:0000303" key="3">
    <source>
    </source>
</evidence>
<evidence type="ECO:0000305" key="4"/>
<evidence type="ECO:0000305" key="5">
    <source>
    </source>
</evidence>
<keyword id="KW-0165">Cleavage on pair of basic residues</keyword>
<keyword id="KW-1015">Disulfide bond</keyword>
<keyword id="KW-0528">Neurotoxin</keyword>
<keyword id="KW-0964">Secreted</keyword>
<keyword id="KW-0732">Signal</keyword>
<keyword id="KW-0800">Toxin</keyword>
<name>CELE_CONAJ</name>